<sequence>EQFDDYGHMRF</sequence>
<name>SK1_PSEFO</name>
<evidence type="ECO:0000250" key="1">
    <source>
        <dbReference type="UniProtKB" id="P41493"/>
    </source>
</evidence>
<evidence type="ECO:0000255" key="2"/>
<evidence type="ECO:0000269" key="3">
    <source>
    </source>
</evidence>
<evidence type="ECO:0000303" key="4">
    <source>
    </source>
</evidence>
<evidence type="ECO:0000305" key="5"/>
<organism>
    <name type="scientific">Pseudoderopeltis foveolata</name>
    <name type="common">Cockroach</name>
    <dbReference type="NCBI Taxonomy" id="303879"/>
    <lineage>
        <taxon>Eukaryota</taxon>
        <taxon>Metazoa</taxon>
        <taxon>Ecdysozoa</taxon>
        <taxon>Arthropoda</taxon>
        <taxon>Hexapoda</taxon>
        <taxon>Insecta</taxon>
        <taxon>Pterygota</taxon>
        <taxon>Neoptera</taxon>
        <taxon>Polyneoptera</taxon>
        <taxon>Dictyoptera</taxon>
        <taxon>Blattodea</taxon>
        <taxon>Blattoidea</taxon>
        <taxon>Blattidae</taxon>
        <taxon>Blattinae</taxon>
        <taxon>Pseudoderopeltis</taxon>
    </lineage>
</organism>
<proteinExistence type="evidence at protein level"/>
<reference evidence="5" key="1">
    <citation type="journal article" date="2009" name="BMC Evol. Biol.">
        <title>A proteomic approach for studying insect phylogeny: CAPA peptides of ancient insect taxa (Dictyoptera, Blattoptera) as a test case.</title>
        <authorList>
            <person name="Roth S."/>
            <person name="Fromm B."/>
            <person name="Gaede G."/>
            <person name="Predel R."/>
        </authorList>
    </citation>
    <scope>PROTEIN SEQUENCE</scope>
    <scope>AMIDATION AT PHE-11</scope>
    <source>
        <tissue evidence="3">Corpora cardiaca</tissue>
    </source>
</reference>
<comment type="function">
    <text evidence="1">Myotropic peptide.</text>
</comment>
<comment type="subcellular location">
    <subcellularLocation>
        <location evidence="5">Secreted</location>
    </subcellularLocation>
</comment>
<comment type="similarity">
    <text evidence="2">Belongs to the gastrin/cholecystokinin family.</text>
</comment>
<protein>
    <recommendedName>
        <fullName evidence="4">Sulfakinin-1</fullName>
        <shortName evidence="4">PseFo-SK-1</shortName>
    </recommendedName>
</protein>
<dbReference type="GO" id="GO:0005576">
    <property type="term" value="C:extracellular region"/>
    <property type="evidence" value="ECO:0007669"/>
    <property type="project" value="UniProtKB-SubCell"/>
</dbReference>
<dbReference type="GO" id="GO:0005179">
    <property type="term" value="F:hormone activity"/>
    <property type="evidence" value="ECO:0007669"/>
    <property type="project" value="UniProtKB-KW"/>
</dbReference>
<dbReference type="GO" id="GO:0007218">
    <property type="term" value="P:neuropeptide signaling pathway"/>
    <property type="evidence" value="ECO:0007669"/>
    <property type="project" value="UniProtKB-KW"/>
</dbReference>
<dbReference type="InterPro" id="IPR013152">
    <property type="entry name" value="Gastrin/cholecystokinin_CS"/>
</dbReference>
<dbReference type="InterPro" id="IPR013259">
    <property type="entry name" value="Sulfakinin"/>
</dbReference>
<dbReference type="Pfam" id="PF08257">
    <property type="entry name" value="Sulfakinin"/>
    <property type="match status" value="1"/>
</dbReference>
<dbReference type="PROSITE" id="PS00259">
    <property type="entry name" value="GASTRIN"/>
    <property type="match status" value="1"/>
</dbReference>
<accession>P85761</accession>
<feature type="peptide" id="PRO_0000378897" description="Sulfakinin-1" evidence="3">
    <location>
        <begin position="1"/>
        <end position="11"/>
    </location>
</feature>
<feature type="modified residue" description="Sulfotyrosine" evidence="1">
    <location>
        <position position="6"/>
    </location>
</feature>
<feature type="modified residue" description="Phenylalanine amide" evidence="3">
    <location>
        <position position="11"/>
    </location>
</feature>
<keyword id="KW-0027">Amidation</keyword>
<keyword id="KW-0903">Direct protein sequencing</keyword>
<keyword id="KW-0372">Hormone</keyword>
<keyword id="KW-0527">Neuropeptide</keyword>
<keyword id="KW-0964">Secreted</keyword>
<keyword id="KW-0765">Sulfation</keyword>